<keyword id="KW-0002">3D-structure</keyword>
<keyword id="KW-0963">Cytoplasm</keyword>
<keyword id="KW-0967">Endosome</keyword>
<keyword id="KW-0342">GTP-binding</keyword>
<keyword id="KW-0378">Hydrolase</keyword>
<keyword id="KW-0449">Lipoprotein</keyword>
<keyword id="KW-0460">Magnesium</keyword>
<keyword id="KW-0472">Membrane</keyword>
<keyword id="KW-0479">Metal-binding</keyword>
<keyword id="KW-0488">Methylation</keyword>
<keyword id="KW-0547">Nucleotide-binding</keyword>
<keyword id="KW-0597">Phosphoprotein</keyword>
<keyword id="KW-0636">Prenylation</keyword>
<keyword id="KW-0653">Protein transport</keyword>
<keyword id="KW-1267">Proteomics identification</keyword>
<keyword id="KW-1185">Reference proteome</keyword>
<keyword id="KW-0813">Transport</keyword>
<protein>
    <recommendedName>
        <fullName>Ras-related protein Rab-4A</fullName>
        <ecNumber evidence="19 20">3.6.5.2</ecNumber>
    </recommendedName>
</protein>
<dbReference type="EC" id="3.6.5.2" evidence="19 20"/>
<dbReference type="EMBL" id="M28211">
    <property type="protein sequence ID" value="AAA60244.1"/>
    <property type="status" value="ALT_FRAME"/>
    <property type="molecule type" value="mRNA"/>
</dbReference>
<dbReference type="EMBL" id="AY585832">
    <property type="protein sequence ID" value="AAT91347.1"/>
    <property type="molecule type" value="mRNA"/>
</dbReference>
<dbReference type="EMBL" id="AF498934">
    <property type="protein sequence ID" value="AAM21082.1"/>
    <property type="molecule type" value="mRNA"/>
</dbReference>
<dbReference type="EMBL" id="AK313807">
    <property type="protein sequence ID" value="BAG36543.1"/>
    <property type="molecule type" value="mRNA"/>
</dbReference>
<dbReference type="EMBL" id="AL162595">
    <property type="status" value="NOT_ANNOTATED_CDS"/>
    <property type="molecule type" value="Genomic_DNA"/>
</dbReference>
<dbReference type="EMBL" id="AL117350">
    <property type="status" value="NOT_ANNOTATED_CDS"/>
    <property type="molecule type" value="Genomic_DNA"/>
</dbReference>
<dbReference type="EMBL" id="CH471098">
    <property type="protein sequence ID" value="EAW69890.1"/>
    <property type="molecule type" value="Genomic_DNA"/>
</dbReference>
<dbReference type="EMBL" id="BC002438">
    <property type="protein sequence ID" value="AAH02438.1"/>
    <property type="molecule type" value="mRNA"/>
</dbReference>
<dbReference type="EMBL" id="BC004309">
    <property type="protein sequence ID" value="AAH04309.1"/>
    <property type="molecule type" value="mRNA"/>
</dbReference>
<dbReference type="CCDS" id="CCDS31050.1"/>
<dbReference type="PIR" id="E34323">
    <property type="entry name" value="E34323"/>
</dbReference>
<dbReference type="RefSeq" id="NP_001258927.1">
    <property type="nucleotide sequence ID" value="NM_001271998.1"/>
</dbReference>
<dbReference type="RefSeq" id="NP_004569.2">
    <property type="nucleotide sequence ID" value="NM_004578.3"/>
</dbReference>
<dbReference type="PDB" id="1YU9">
    <property type="method" value="X-ray"/>
    <property type="resolution" value="2.07 A"/>
    <property type="chains" value="A=7-177"/>
</dbReference>
<dbReference type="PDB" id="1Z0K">
    <property type="method" value="X-ray"/>
    <property type="resolution" value="1.92 A"/>
    <property type="chains" value="A/C=7-177"/>
</dbReference>
<dbReference type="PDB" id="2BMD">
    <property type="method" value="X-ray"/>
    <property type="resolution" value="1.80 A"/>
    <property type="chains" value="A=6-189"/>
</dbReference>
<dbReference type="PDB" id="2BME">
    <property type="method" value="X-ray"/>
    <property type="resolution" value="1.57 A"/>
    <property type="chains" value="A/B/C/D=6-189"/>
</dbReference>
<dbReference type="PDBsum" id="1YU9"/>
<dbReference type="PDBsum" id="1Z0K"/>
<dbReference type="PDBsum" id="2BMD"/>
<dbReference type="PDBsum" id="2BME"/>
<dbReference type="SMR" id="P20338"/>
<dbReference type="BioGRID" id="111805">
    <property type="interactions" value="454"/>
</dbReference>
<dbReference type="CORUM" id="P20338"/>
<dbReference type="DIP" id="DIP-372N"/>
<dbReference type="FunCoup" id="P20338">
    <property type="interactions" value="1150"/>
</dbReference>
<dbReference type="IntAct" id="P20338">
    <property type="interactions" value="58"/>
</dbReference>
<dbReference type="MINT" id="P20338"/>
<dbReference type="STRING" id="9606.ENSP00000355651"/>
<dbReference type="MoonDB" id="P20338">
    <property type="type" value="Predicted"/>
</dbReference>
<dbReference type="GlyGen" id="P20338">
    <property type="glycosylation" value="1 site, 1 N-linked glycan (1 site)"/>
</dbReference>
<dbReference type="iPTMnet" id="P20338"/>
<dbReference type="PhosphoSitePlus" id="P20338"/>
<dbReference type="SwissPalm" id="P20338"/>
<dbReference type="BioMuta" id="RAB4A"/>
<dbReference type="DMDM" id="460018296"/>
<dbReference type="jPOST" id="P20338"/>
<dbReference type="MassIVE" id="P20338"/>
<dbReference type="PaxDb" id="9606-ENSP00000355651"/>
<dbReference type="PeptideAtlas" id="P20338"/>
<dbReference type="ProteomicsDB" id="53750"/>
<dbReference type="Pumba" id="P20338"/>
<dbReference type="Antibodypedia" id="34673">
    <property type="antibodies" value="345 antibodies from 35 providers"/>
</dbReference>
<dbReference type="DNASU" id="5867"/>
<dbReference type="Ensembl" id="ENST00000366690.5">
    <property type="protein sequence ID" value="ENSP00000355651.4"/>
    <property type="gene ID" value="ENSG00000168118.12"/>
</dbReference>
<dbReference type="GeneID" id="5867"/>
<dbReference type="KEGG" id="hsa:5867"/>
<dbReference type="MANE-Select" id="ENST00000366690.5">
    <property type="protein sequence ID" value="ENSP00000355651.4"/>
    <property type="RefSeq nucleotide sequence ID" value="NM_004578.4"/>
    <property type="RefSeq protein sequence ID" value="NP_004569.2"/>
</dbReference>
<dbReference type="UCSC" id="uc001hth.5">
    <property type="organism name" value="human"/>
</dbReference>
<dbReference type="AGR" id="HGNC:9781"/>
<dbReference type="CTD" id="5867"/>
<dbReference type="DisGeNET" id="5867"/>
<dbReference type="GeneCards" id="RAB4A"/>
<dbReference type="HGNC" id="HGNC:9781">
    <property type="gene designation" value="RAB4A"/>
</dbReference>
<dbReference type="HPA" id="ENSG00000168118">
    <property type="expression patterns" value="Low tissue specificity"/>
</dbReference>
<dbReference type="MIM" id="179511">
    <property type="type" value="gene"/>
</dbReference>
<dbReference type="neXtProt" id="NX_P20338"/>
<dbReference type="OpenTargets" id="ENSG00000168118"/>
<dbReference type="PharmGKB" id="PA34141"/>
<dbReference type="VEuPathDB" id="HostDB:ENSG00000168118"/>
<dbReference type="eggNOG" id="KOG0086">
    <property type="taxonomic scope" value="Eukaryota"/>
</dbReference>
<dbReference type="GeneTree" id="ENSGT00940000157464"/>
<dbReference type="HOGENOM" id="CLU_041217_23_1_1"/>
<dbReference type="InParanoid" id="P20338"/>
<dbReference type="OMA" id="HEEYALF"/>
<dbReference type="OrthoDB" id="9989112at2759"/>
<dbReference type="PAN-GO" id="P20338">
    <property type="GO annotations" value="7 GO annotations based on evolutionary models"/>
</dbReference>
<dbReference type="PhylomeDB" id="P20338"/>
<dbReference type="TreeFam" id="TF300032"/>
<dbReference type="PathwayCommons" id="P20338"/>
<dbReference type="Reactome" id="R-HSA-1445148">
    <property type="pathway name" value="Translocation of SLC2A4 (GLUT4) to the plasma membrane"/>
</dbReference>
<dbReference type="Reactome" id="R-HSA-1660499">
    <property type="pathway name" value="Synthesis of PIPs at the plasma membrane"/>
</dbReference>
<dbReference type="Reactome" id="R-HSA-8854214">
    <property type="pathway name" value="TBC/RABGAPs"/>
</dbReference>
<dbReference type="Reactome" id="R-HSA-8873719">
    <property type="pathway name" value="RAB geranylgeranylation"/>
</dbReference>
<dbReference type="Reactome" id="R-HSA-8875656">
    <property type="pathway name" value="MET receptor recycling"/>
</dbReference>
<dbReference type="SignaLink" id="P20338"/>
<dbReference type="SIGNOR" id="P20338"/>
<dbReference type="BioGRID-ORCS" id="5867">
    <property type="hits" value="51 hits in 1159 CRISPR screens"/>
</dbReference>
<dbReference type="ChiTaRS" id="RAB4A">
    <property type="organism name" value="human"/>
</dbReference>
<dbReference type="EvolutionaryTrace" id="P20338"/>
<dbReference type="GeneWiki" id="RAB4A"/>
<dbReference type="GenomeRNAi" id="5867"/>
<dbReference type="Pharos" id="P20338">
    <property type="development level" value="Tbio"/>
</dbReference>
<dbReference type="PRO" id="PR:P20338"/>
<dbReference type="Proteomes" id="UP000005640">
    <property type="component" value="Chromosome 1"/>
</dbReference>
<dbReference type="RNAct" id="P20338">
    <property type="molecule type" value="protein"/>
</dbReference>
<dbReference type="Bgee" id="ENSG00000168118">
    <property type="expression patterns" value="Expressed in lateral nuclear group of thalamus and 214 other cell types or tissues"/>
</dbReference>
<dbReference type="ExpressionAtlas" id="P20338">
    <property type="expression patterns" value="baseline and differential"/>
</dbReference>
<dbReference type="GO" id="GO:0030659">
    <property type="term" value="C:cytoplasmic vesicle membrane"/>
    <property type="evidence" value="ECO:0000304"/>
    <property type="project" value="Reactome"/>
</dbReference>
<dbReference type="GO" id="GO:0031901">
    <property type="term" value="C:early endosome membrane"/>
    <property type="evidence" value="ECO:0000304"/>
    <property type="project" value="Reactome"/>
</dbReference>
<dbReference type="GO" id="GO:0070062">
    <property type="term" value="C:extracellular exosome"/>
    <property type="evidence" value="ECO:0000314"/>
    <property type="project" value="UniProtKB"/>
</dbReference>
<dbReference type="GO" id="GO:0098978">
    <property type="term" value="C:glutamatergic synapse"/>
    <property type="evidence" value="ECO:0007669"/>
    <property type="project" value="Ensembl"/>
</dbReference>
<dbReference type="GO" id="GO:0032593">
    <property type="term" value="C:insulin-responsive compartment"/>
    <property type="evidence" value="ECO:0000318"/>
    <property type="project" value="GO_Central"/>
</dbReference>
<dbReference type="GO" id="GO:0048471">
    <property type="term" value="C:perinuclear region of cytoplasm"/>
    <property type="evidence" value="ECO:0000314"/>
    <property type="project" value="UniProtKB"/>
</dbReference>
<dbReference type="GO" id="GO:0055037">
    <property type="term" value="C:recycling endosome"/>
    <property type="evidence" value="ECO:0000318"/>
    <property type="project" value="GO_Central"/>
</dbReference>
<dbReference type="GO" id="GO:0055038">
    <property type="term" value="C:recycling endosome membrane"/>
    <property type="evidence" value="ECO:0007669"/>
    <property type="project" value="UniProtKB-SubCell"/>
</dbReference>
<dbReference type="GO" id="GO:0031982">
    <property type="term" value="C:vesicle"/>
    <property type="evidence" value="ECO:0000314"/>
    <property type="project" value="UniProtKB"/>
</dbReference>
<dbReference type="GO" id="GO:0003925">
    <property type="term" value="F:G protein activity"/>
    <property type="evidence" value="ECO:0007669"/>
    <property type="project" value="UniProtKB-EC"/>
</dbReference>
<dbReference type="GO" id="GO:0019003">
    <property type="term" value="F:GDP binding"/>
    <property type="evidence" value="ECO:0000314"/>
    <property type="project" value="UniProtKB"/>
</dbReference>
<dbReference type="GO" id="GO:0005525">
    <property type="term" value="F:GTP binding"/>
    <property type="evidence" value="ECO:0000314"/>
    <property type="project" value="UniProtKB"/>
</dbReference>
<dbReference type="GO" id="GO:0003924">
    <property type="term" value="F:GTPase activity"/>
    <property type="evidence" value="ECO:0000314"/>
    <property type="project" value="UniProtKB"/>
</dbReference>
<dbReference type="GO" id="GO:0019882">
    <property type="term" value="P:antigen processing and presentation"/>
    <property type="evidence" value="ECO:0000315"/>
    <property type="project" value="UniProtKB"/>
</dbReference>
<dbReference type="GO" id="GO:0098968">
    <property type="term" value="P:neurotransmitter receptor transport postsynaptic membrane to endosome"/>
    <property type="evidence" value="ECO:0007669"/>
    <property type="project" value="Ensembl"/>
</dbReference>
<dbReference type="GO" id="GO:0015031">
    <property type="term" value="P:protein transport"/>
    <property type="evidence" value="ECO:0007669"/>
    <property type="project" value="UniProtKB-KW"/>
</dbReference>
<dbReference type="GO" id="GO:0032482">
    <property type="term" value="P:Rab protein signal transduction"/>
    <property type="evidence" value="ECO:0007669"/>
    <property type="project" value="InterPro"/>
</dbReference>
<dbReference type="GO" id="GO:0030100">
    <property type="term" value="P:regulation of endocytosis"/>
    <property type="evidence" value="ECO:0000318"/>
    <property type="project" value="GO_Central"/>
</dbReference>
<dbReference type="GO" id="GO:0016192">
    <property type="term" value="P:vesicle-mediated transport"/>
    <property type="evidence" value="ECO:0000318"/>
    <property type="project" value="GO_Central"/>
</dbReference>
<dbReference type="GO" id="GO:0099003">
    <property type="term" value="P:vesicle-mediated transport in synapse"/>
    <property type="evidence" value="ECO:0007669"/>
    <property type="project" value="Ensembl"/>
</dbReference>
<dbReference type="CDD" id="cd04113">
    <property type="entry name" value="Rab4"/>
    <property type="match status" value="1"/>
</dbReference>
<dbReference type="FunFam" id="3.40.50.300:FF:000280">
    <property type="entry name" value="Putative ras-related protein Rab-4B"/>
    <property type="match status" value="1"/>
</dbReference>
<dbReference type="Gene3D" id="3.40.50.300">
    <property type="entry name" value="P-loop containing nucleotide triphosphate hydrolases"/>
    <property type="match status" value="1"/>
</dbReference>
<dbReference type="InterPro" id="IPR027417">
    <property type="entry name" value="P-loop_NTPase"/>
</dbReference>
<dbReference type="InterPro" id="IPR041819">
    <property type="entry name" value="Rab4"/>
</dbReference>
<dbReference type="InterPro" id="IPR050209">
    <property type="entry name" value="Rab_GTPases_membrane_traffic"/>
</dbReference>
<dbReference type="InterPro" id="IPR005225">
    <property type="entry name" value="Small_GTP-bd"/>
</dbReference>
<dbReference type="InterPro" id="IPR001806">
    <property type="entry name" value="Small_GTPase"/>
</dbReference>
<dbReference type="NCBIfam" id="TIGR00231">
    <property type="entry name" value="small_GTP"/>
    <property type="match status" value="1"/>
</dbReference>
<dbReference type="PANTHER" id="PTHR47979">
    <property type="entry name" value="DRAB11-RELATED"/>
    <property type="match status" value="1"/>
</dbReference>
<dbReference type="Pfam" id="PF00071">
    <property type="entry name" value="Ras"/>
    <property type="match status" value="1"/>
</dbReference>
<dbReference type="PRINTS" id="PR00449">
    <property type="entry name" value="RASTRNSFRMNG"/>
</dbReference>
<dbReference type="SMART" id="SM00177">
    <property type="entry name" value="ARF"/>
    <property type="match status" value="1"/>
</dbReference>
<dbReference type="SMART" id="SM00175">
    <property type="entry name" value="RAB"/>
    <property type="match status" value="1"/>
</dbReference>
<dbReference type="SMART" id="SM00176">
    <property type="entry name" value="RAN"/>
    <property type="match status" value="1"/>
</dbReference>
<dbReference type="SMART" id="SM00173">
    <property type="entry name" value="RAS"/>
    <property type="match status" value="1"/>
</dbReference>
<dbReference type="SMART" id="SM00174">
    <property type="entry name" value="RHO"/>
    <property type="match status" value="1"/>
</dbReference>
<dbReference type="SUPFAM" id="SSF52540">
    <property type="entry name" value="P-loop containing nucleoside triphosphate hydrolases"/>
    <property type="match status" value="1"/>
</dbReference>
<dbReference type="PROSITE" id="PS51419">
    <property type="entry name" value="RAB"/>
    <property type="match status" value="1"/>
</dbReference>
<accession>P20338</accession>
<accession>Q5T7P7</accession>
<accession>Q9BQ44</accession>
<sequence length="218" mass="24390">MSQTAMSETYDFLFKFLVIGNAGTGKSCLLHQFIEKKFKDDSNHTIGVEFGSKIINVGGKYVKLQIWDTAGQERFRSVTRSYYRGAAGALLVYDITSRETYNALTNWLTDARMLASQNIVIILCGNKKDLDADREVTFLEASRFAQENELMFLETSALTGENVEEAFVQCARKILNKIESGELDPERMGSGIQYGDAALRQLRSPRRAQAPNAQECGC</sequence>
<evidence type="ECO:0000250" key="1"/>
<evidence type="ECO:0000250" key="2">
    <source>
        <dbReference type="UniProtKB" id="P05714"/>
    </source>
</evidence>
<evidence type="ECO:0000250" key="3">
    <source>
        <dbReference type="UniProtKB" id="P56371"/>
    </source>
</evidence>
<evidence type="ECO:0000250" key="4">
    <source>
        <dbReference type="UniProtKB" id="P61018"/>
    </source>
</evidence>
<evidence type="ECO:0000250" key="5">
    <source>
        <dbReference type="UniProtKB" id="P61106"/>
    </source>
</evidence>
<evidence type="ECO:0000269" key="6">
    <source>
    </source>
</evidence>
<evidence type="ECO:0000269" key="7">
    <source>
    </source>
</evidence>
<evidence type="ECO:0000269" key="8">
    <source>
    </source>
</evidence>
<evidence type="ECO:0000269" key="9">
    <source>
    </source>
</evidence>
<evidence type="ECO:0000269" key="10">
    <source>
    </source>
</evidence>
<evidence type="ECO:0000269" key="11">
    <source>
    </source>
</evidence>
<evidence type="ECO:0000269" key="12">
    <source>
    </source>
</evidence>
<evidence type="ECO:0000269" key="13">
    <source>
    </source>
</evidence>
<evidence type="ECO:0000269" key="14">
    <source>
    </source>
</evidence>
<evidence type="ECO:0000269" key="15">
    <source>
    </source>
</evidence>
<evidence type="ECO:0000269" key="16">
    <source>
    </source>
</evidence>
<evidence type="ECO:0000269" key="17">
    <source>
    </source>
</evidence>
<evidence type="ECO:0000305" key="18"/>
<evidence type="ECO:0000305" key="19">
    <source>
    </source>
</evidence>
<evidence type="ECO:0000305" key="20">
    <source>
    </source>
</evidence>
<evidence type="ECO:0000312" key="21">
    <source>
        <dbReference type="HGNC" id="HGNC:9781"/>
    </source>
</evidence>
<evidence type="ECO:0007744" key="22">
    <source>
        <dbReference type="PDB" id="1YU9"/>
    </source>
</evidence>
<evidence type="ECO:0007744" key="23">
    <source>
        <dbReference type="PDB" id="1Z0K"/>
    </source>
</evidence>
<evidence type="ECO:0007744" key="24">
    <source>
        <dbReference type="PDB" id="2BMD"/>
    </source>
</evidence>
<evidence type="ECO:0007744" key="25">
    <source>
        <dbReference type="PDB" id="2BME"/>
    </source>
</evidence>
<evidence type="ECO:0007744" key="26">
    <source>
    </source>
</evidence>
<evidence type="ECO:0007829" key="27">
    <source>
        <dbReference type="PDB" id="2BME"/>
    </source>
</evidence>
<feature type="chain" id="PRO_0000121093" description="Ras-related protein Rab-4A">
    <location>
        <begin position="1"/>
        <end position="218"/>
    </location>
</feature>
<feature type="short sequence motif" description="Switch 1" evidence="5">
    <location>
        <begin position="44"/>
        <end position="49"/>
    </location>
</feature>
<feature type="short sequence motif" description="Switch 2" evidence="5">
    <location>
        <begin position="70"/>
        <end position="79"/>
    </location>
</feature>
<feature type="binding site" evidence="12 24">
    <location>
        <position position="23"/>
    </location>
    <ligand>
        <name>GDP</name>
        <dbReference type="ChEBI" id="CHEBI:58189"/>
    </ligand>
</feature>
<feature type="binding site" evidence="13 23">
    <location>
        <position position="23"/>
    </location>
    <ligand>
        <name>GTP</name>
        <dbReference type="ChEBI" id="CHEBI:37565"/>
    </ligand>
</feature>
<feature type="binding site" evidence="12 24">
    <location>
        <position position="24"/>
    </location>
    <ligand>
        <name>GDP</name>
        <dbReference type="ChEBI" id="CHEBI:58189"/>
    </ligand>
</feature>
<feature type="binding site" evidence="13 23">
    <location>
        <position position="24"/>
    </location>
    <ligand>
        <name>GTP</name>
        <dbReference type="ChEBI" id="CHEBI:37565"/>
    </ligand>
</feature>
<feature type="binding site" evidence="12 24">
    <location>
        <position position="25"/>
    </location>
    <ligand>
        <name>GDP</name>
        <dbReference type="ChEBI" id="CHEBI:58189"/>
    </ligand>
</feature>
<feature type="binding site" evidence="13 23">
    <location>
        <position position="25"/>
    </location>
    <ligand>
        <name>GTP</name>
        <dbReference type="ChEBI" id="CHEBI:37565"/>
    </ligand>
</feature>
<feature type="binding site" evidence="12 24">
    <location>
        <position position="26"/>
    </location>
    <ligand>
        <name>GDP</name>
        <dbReference type="ChEBI" id="CHEBI:58189"/>
    </ligand>
</feature>
<feature type="binding site" evidence="23">
    <location>
        <position position="26"/>
    </location>
    <ligand>
        <name>GTP</name>
        <dbReference type="ChEBI" id="CHEBI:37565"/>
    </ligand>
</feature>
<feature type="binding site" evidence="12 24">
    <location>
        <position position="27"/>
    </location>
    <ligand>
        <name>GDP</name>
        <dbReference type="ChEBI" id="CHEBI:58189"/>
    </ligand>
</feature>
<feature type="binding site" evidence="13 23">
    <location>
        <position position="27"/>
    </location>
    <ligand>
        <name>GTP</name>
        <dbReference type="ChEBI" id="CHEBI:37565"/>
    </ligand>
</feature>
<feature type="binding site" evidence="12 13 22 23 25">
    <location>
        <position position="27"/>
    </location>
    <ligand>
        <name>Mg(2+)</name>
        <dbReference type="ChEBI" id="CHEBI:18420"/>
    </ligand>
</feature>
<feature type="binding site" evidence="12 24">
    <location>
        <position position="28"/>
    </location>
    <ligand>
        <name>GDP</name>
        <dbReference type="ChEBI" id="CHEBI:58189"/>
    </ligand>
</feature>
<feature type="binding site" evidence="13 23">
    <location>
        <position position="28"/>
    </location>
    <ligand>
        <name>GTP</name>
        <dbReference type="ChEBI" id="CHEBI:37565"/>
    </ligand>
</feature>
<feature type="binding site" evidence="13 23">
    <location>
        <position position="42"/>
    </location>
    <ligand>
        <name>GTP</name>
        <dbReference type="ChEBI" id="CHEBI:37565"/>
    </ligand>
</feature>
<feature type="binding site" evidence="13 23">
    <location>
        <position position="44"/>
    </location>
    <ligand>
        <name>GTP</name>
        <dbReference type="ChEBI" id="CHEBI:37565"/>
    </ligand>
</feature>
<feature type="binding site" evidence="13 23">
    <location>
        <position position="45"/>
    </location>
    <ligand>
        <name>GTP</name>
        <dbReference type="ChEBI" id="CHEBI:37565"/>
    </ligand>
</feature>
<feature type="binding site" evidence="12 13 22 23 25">
    <location>
        <position position="45"/>
    </location>
    <ligand>
        <name>Mg(2+)</name>
        <dbReference type="ChEBI" id="CHEBI:18420"/>
    </ligand>
</feature>
<feature type="binding site" evidence="4">
    <location>
        <position position="68"/>
    </location>
    <ligand>
        <name>Mg(2+)</name>
        <dbReference type="ChEBI" id="CHEBI:18420"/>
    </ligand>
</feature>
<feature type="binding site" evidence="23">
    <location>
        <position position="71"/>
    </location>
    <ligand>
        <name>GTP</name>
        <dbReference type="ChEBI" id="CHEBI:37565"/>
    </ligand>
</feature>
<feature type="binding site" evidence="12 24">
    <location>
        <position position="126"/>
    </location>
    <ligand>
        <name>GDP</name>
        <dbReference type="ChEBI" id="CHEBI:58189"/>
    </ligand>
</feature>
<feature type="binding site" evidence="13 23">
    <location>
        <position position="126"/>
    </location>
    <ligand>
        <name>GTP</name>
        <dbReference type="ChEBI" id="CHEBI:37565"/>
    </ligand>
</feature>
<feature type="binding site" evidence="12 24">
    <location>
        <position position="127"/>
    </location>
    <ligand>
        <name>GDP</name>
        <dbReference type="ChEBI" id="CHEBI:58189"/>
    </ligand>
</feature>
<feature type="binding site" evidence="23">
    <location>
        <position position="127"/>
    </location>
    <ligand>
        <name>GTP</name>
        <dbReference type="ChEBI" id="CHEBI:37565"/>
    </ligand>
</feature>
<feature type="binding site" evidence="12 24">
    <location>
        <position position="129"/>
    </location>
    <ligand>
        <name>GDP</name>
        <dbReference type="ChEBI" id="CHEBI:58189"/>
    </ligand>
</feature>
<feature type="binding site" evidence="13 23">
    <location>
        <position position="129"/>
    </location>
    <ligand>
        <name>GTP</name>
        <dbReference type="ChEBI" id="CHEBI:37565"/>
    </ligand>
</feature>
<feature type="binding site" evidence="12 24">
    <location>
        <position position="157"/>
    </location>
    <ligand>
        <name>GDP</name>
        <dbReference type="ChEBI" id="CHEBI:58189"/>
    </ligand>
</feature>
<feature type="binding site" evidence="13 23">
    <location>
        <position position="157"/>
    </location>
    <ligand>
        <name>GTP</name>
        <dbReference type="ChEBI" id="CHEBI:37565"/>
    </ligand>
</feature>
<feature type="binding site" evidence="12 24">
    <location>
        <position position="158"/>
    </location>
    <ligand>
        <name>GDP</name>
        <dbReference type="ChEBI" id="CHEBI:58189"/>
    </ligand>
</feature>
<feature type="binding site" evidence="13 23">
    <location>
        <position position="158"/>
    </location>
    <ligand>
        <name>GTP</name>
        <dbReference type="ChEBI" id="CHEBI:37565"/>
    </ligand>
</feature>
<feature type="modified residue" description="5-glutamyl serotonin" evidence="3">
    <location>
        <position position="72"/>
    </location>
</feature>
<feature type="modified residue" description="Phosphoserine" evidence="26">
    <location>
        <position position="190"/>
    </location>
</feature>
<feature type="modified residue" description="Phosphoserine; by CDK1" evidence="9">
    <location>
        <position position="204"/>
    </location>
</feature>
<feature type="modified residue" description="Cysteine methyl ester" evidence="1">
    <location>
        <position position="218"/>
    </location>
</feature>
<feature type="lipid moiety-binding region" description="S-geranylgeranyl cysteine" evidence="1">
    <location>
        <position position="216"/>
    </location>
</feature>
<feature type="lipid moiety-binding region" description="S-geranylgeranyl cysteine" evidence="1">
    <location>
        <position position="218"/>
    </location>
</feature>
<feature type="mutagenesis site" description="10-fold decrease in ZFYVE20 binding affinity." evidence="13">
    <original>G</original>
    <variation>A</variation>
    <location>
        <position position="51"/>
    </location>
</feature>
<feature type="mutagenesis site" description="10-fold decrease in ZFYVE20 binding affinity." evidence="13">
    <original>G</original>
    <variation>L</variation>
    <location>
        <position position="51"/>
    </location>
</feature>
<feature type="sequence conflict" description="In Ref. 1; AAA60244." evidence="18" ref="1">
    <original>N</original>
    <variation>D</variation>
    <location>
        <position position="162"/>
    </location>
</feature>
<feature type="sequence conflict" description="In Ref. 1; AAA60244." evidence="18" ref="1">
    <original>A</original>
    <variation>T</variation>
    <location>
        <position position="208"/>
    </location>
</feature>
<feature type="strand" evidence="27">
    <location>
        <begin position="11"/>
        <end position="21"/>
    </location>
</feature>
<feature type="helix" evidence="27">
    <location>
        <begin position="26"/>
        <end position="35"/>
    </location>
</feature>
<feature type="strand" evidence="27">
    <location>
        <begin position="46"/>
        <end position="57"/>
    </location>
</feature>
<feature type="strand" evidence="27">
    <location>
        <begin position="60"/>
        <end position="69"/>
    </location>
</feature>
<feature type="helix" evidence="27">
    <location>
        <begin position="73"/>
        <end position="75"/>
    </location>
</feature>
<feature type="helix" evidence="27">
    <location>
        <begin position="76"/>
        <end position="80"/>
    </location>
</feature>
<feature type="strand" evidence="27">
    <location>
        <begin position="87"/>
        <end position="94"/>
    </location>
</feature>
<feature type="helix" evidence="27">
    <location>
        <begin position="98"/>
        <end position="102"/>
    </location>
</feature>
<feature type="helix" evidence="27">
    <location>
        <begin position="104"/>
        <end position="114"/>
    </location>
</feature>
<feature type="strand" evidence="27">
    <location>
        <begin position="120"/>
        <end position="126"/>
    </location>
</feature>
<feature type="helix" evidence="27">
    <location>
        <begin position="128"/>
        <end position="133"/>
    </location>
</feature>
<feature type="helix" evidence="27">
    <location>
        <begin position="138"/>
        <end position="147"/>
    </location>
</feature>
<feature type="strand" evidence="27">
    <location>
        <begin position="151"/>
        <end position="154"/>
    </location>
</feature>
<feature type="turn" evidence="27">
    <location>
        <begin position="157"/>
        <end position="159"/>
    </location>
</feature>
<feature type="helix" evidence="27">
    <location>
        <begin position="163"/>
        <end position="179"/>
    </location>
</feature>
<proteinExistence type="evidence at protein level"/>
<gene>
    <name evidence="21" type="primary">RAB4A</name>
    <name type="synonym">RAB4</name>
</gene>
<organism>
    <name type="scientific">Homo sapiens</name>
    <name type="common">Human</name>
    <dbReference type="NCBI Taxonomy" id="9606"/>
    <lineage>
        <taxon>Eukaryota</taxon>
        <taxon>Metazoa</taxon>
        <taxon>Chordata</taxon>
        <taxon>Craniata</taxon>
        <taxon>Vertebrata</taxon>
        <taxon>Euteleostomi</taxon>
        <taxon>Mammalia</taxon>
        <taxon>Eutheria</taxon>
        <taxon>Euarchontoglires</taxon>
        <taxon>Primates</taxon>
        <taxon>Haplorrhini</taxon>
        <taxon>Catarrhini</taxon>
        <taxon>Hominidae</taxon>
        <taxon>Homo</taxon>
    </lineage>
</organism>
<name>RAB4A_HUMAN</name>
<comment type="function">
    <text evidence="3 12 13 17">The small GTPases Rab are key regulators of intracellular membrane trafficking, from the formation of transport vesicles to their fusion with membranes. Rabs cycle between an inactive GDP-bound form and an active GTP-bound form that is able to recruit to membranes different sets of downstream effectors directly responsible for vesicle formation, movement, tethering and fusion (PubMed:15907487, PubMed:16034420). RAB4A is involved in protein transport (PubMed:29425100). Also plays a role in vesicular traffic. Mediates VEGFR2 endosomal trafficking to enhance VEGFR2 signaling (PubMed:29425100). Acts as a regulator of platelet alpha-granule release during activation and aggregation of platelets (By similarity).</text>
</comment>
<comment type="catalytic activity">
    <reaction evidence="19 20">
        <text>GTP + H2O = GDP + phosphate + H(+)</text>
        <dbReference type="Rhea" id="RHEA:19669"/>
        <dbReference type="ChEBI" id="CHEBI:15377"/>
        <dbReference type="ChEBI" id="CHEBI:15378"/>
        <dbReference type="ChEBI" id="CHEBI:37565"/>
        <dbReference type="ChEBI" id="CHEBI:43474"/>
        <dbReference type="ChEBI" id="CHEBI:58189"/>
        <dbReference type="EC" id="3.6.5.2"/>
    </reaction>
    <physiologicalReaction direction="left-to-right" evidence="19 20">
        <dbReference type="Rhea" id="RHEA:19670"/>
    </physiologicalReaction>
</comment>
<comment type="cofactor">
    <cofactor evidence="12 13">
        <name>Mg(2+)</name>
        <dbReference type="ChEBI" id="CHEBI:18420"/>
    </cofactor>
</comment>
<comment type="activity regulation">
    <text evidence="18">Regulated by guanine nucleotide exchange factors (GEFs) which promote the exchange of bound GDP for free GTP. Regulated by GTPase activating proteins (GAPs) which increase the GTP hydrolysis activity. Inhibited by GDP dissociation inhibitors (GDIs).</text>
</comment>
<comment type="subunit">
    <text evidence="3 6 7 8 10 11 12 13 14 16 17">Interacts with SGSM1, SGSM2 and SGSM3 (By similarity). Interacts with RAB11FIP1, RABEP1, ZFYVE20 and RUFY1 (PubMed:10698684, PubMed:11786538, PubMed:11788822, PubMed:14617813, PubMed:15280022, PubMed:16034420). Interacts (membrane-bound form) with NDRG1; the interaction involves NDRG1 in vesicular recycling of E-cadherin (PubMed:17786215). Interacts (in GTP-bound form) with GRIPAP1 (via N-terminus) (PubMed:20098723). Interacts with RABEP1 and RBSN (PubMed:20098723). Does not interact with HPS4 (By similarity). Interacts with RABEP2; this interaction may mediate VEGFR2 cell surface expression (PubMed:29425100).</text>
</comment>
<comment type="interaction">
    <interactant intactId="EBI-722284">
        <id>P20338</id>
    </interactant>
    <interactant intactId="EBI-949824">
        <id>O00471</id>
        <label>EXOC5</label>
    </interactant>
    <organismsDiffer>false</organismsDiffer>
    <experiments>6</experiments>
</comment>
<comment type="interaction">
    <interactant intactId="EBI-722284">
        <id>P20338</id>
    </interactant>
    <interactant intactId="EBI-752049">
        <id>Q8NEG0</id>
        <label>GARIN6</label>
    </interactant>
    <organismsDiffer>false</organismsDiffer>
    <experiments>3</experiments>
</comment>
<comment type="interaction">
    <interactant intactId="EBI-722284">
        <id>P20338</id>
    </interactant>
    <interactant intactId="EBI-946999">
        <id>P31150</id>
        <label>GDI1</label>
    </interactant>
    <organismsDiffer>false</organismsDiffer>
    <experiments>8</experiments>
</comment>
<comment type="interaction">
    <interactant intactId="EBI-722284">
        <id>P20338</id>
    </interactant>
    <interactant intactId="EBI-1049143">
        <id>P50395</id>
        <label>GDI2</label>
    </interactant>
    <organismsDiffer>false</organismsDiffer>
    <experiments>6</experiments>
</comment>
<comment type="interaction">
    <interactant intactId="EBI-722284">
        <id>P20338</id>
    </interactant>
    <interactant intactId="EBI-717919">
        <id>Q4V328</id>
        <label>GRIPAP1</label>
    </interactant>
    <organismsDiffer>false</organismsDiffer>
    <experiments>4</experiments>
</comment>
<comment type="interaction">
    <interactant intactId="EBI-722284">
        <id>P20338</id>
    </interactant>
    <interactant intactId="EBI-308277">
        <id>Q8IYU2</id>
        <label>HACE1</label>
    </interactant>
    <organismsDiffer>false</organismsDiffer>
    <experiments>3</experiments>
</comment>
<comment type="interaction">
    <interactant intactId="EBI-722284">
        <id>P20338</id>
    </interactant>
    <interactant intactId="EBI-11954971">
        <id>Q96MP8-2</id>
        <label>KCTD7</label>
    </interactant>
    <organismsDiffer>false</organismsDiffer>
    <experiments>3</experiments>
</comment>
<comment type="interaction">
    <interactant intactId="EBI-722284">
        <id>P20338</id>
    </interactant>
    <interactant intactId="EBI-447043">
        <id>Q15276</id>
        <label>RABEP1</label>
    </interactant>
    <organismsDiffer>false</organismsDiffer>
    <experiments>3</experiments>
</comment>
<comment type="interaction">
    <interactant intactId="EBI-722284">
        <id>P20338</id>
    </interactant>
    <interactant intactId="EBI-1105310">
        <id>Q9H1K0</id>
        <label>RBSN</label>
    </interactant>
    <organismsDiffer>false</organismsDiffer>
    <experiments>4</experiments>
</comment>
<comment type="interaction">
    <interactant intactId="EBI-722284">
        <id>P20338</id>
    </interactant>
    <interactant intactId="EBI-2799833">
        <id>Q8N1B4</id>
        <label>VPS52</label>
    </interactant>
    <organismsDiffer>false</organismsDiffer>
    <experiments>4</experiments>
</comment>
<comment type="subcellular location">
    <subcellularLocation>
        <location>Membrane</location>
        <topology evidence="9">Peripheral membrane protein</topology>
    </subcellularLocation>
    <subcellularLocation>
        <location evidence="9">Cytoplasm</location>
    </subcellularLocation>
    <subcellularLocation>
        <location evidence="2">Early endosome membrane</location>
        <topology evidence="2">Peripheral membrane protein</topology>
    </subcellularLocation>
    <subcellularLocation>
        <location evidence="2">Recycling endosome membrane</location>
        <topology evidence="2">Peripheral membrane protein</topology>
    </subcellularLocation>
    <text evidence="9">Generally associated with membranes. Cytoplasmic when phosphorylated by CDK1.</text>
</comment>
<comment type="domain">
    <text evidence="5">Switch 1, switch 2 and the interswitch regions are characteristic of Rab GTPases and mediate the interactions with Rab downstream effectors. The switch regions undergo conformational changes upon nucleotide binding which drives interaction with specific sets of effector proteins, with most effectors only binding to GTP-bound Rab.</text>
</comment>
<comment type="PTM">
    <text evidence="9 15">Phosphorylated by CDK1 kinase during mitosis.</text>
</comment>
<comment type="PTM">
    <text evidence="3">Serotonylation of Gln-72 by TGM2 during activation and aggregation of platelets leads to constitutive activation of GTPase activity.</text>
</comment>
<comment type="similarity">
    <text evidence="18">Belongs to the small GTPase superfamily. Rab family.</text>
</comment>
<comment type="caution">
    <text evidence="18">It is uncertain whether Met-1 or Met-6 is the initiator.</text>
</comment>
<comment type="sequence caution" evidence="18">
    <conflict type="frameshift">
        <sequence resource="EMBL-CDS" id="AAA60244"/>
    </conflict>
</comment>
<reference key="1">
    <citation type="journal article" date="1989" name="J. Biol. Chem.">
        <title>The human Rab genes encode a family of GTP-binding proteins related to yeast YPT1 and SEC4 products involved in secretion.</title>
        <authorList>
            <person name="Zahraoui A."/>
            <person name="Touchot N."/>
            <person name="Chardin P."/>
            <person name="Tavitian A."/>
        </authorList>
    </citation>
    <scope>NUCLEOTIDE SEQUENCE [MRNA]</scope>
</reference>
<reference key="2">
    <citation type="journal article" date="2006" name="J. Biol. Chem.">
        <title>Regulation of CD4 expression via recycling by HRES-1/RAB4 controls susceptibility to HIV infection.</title>
        <authorList>
            <person name="Nagy G."/>
            <person name="Ward J."/>
            <person name="Mosser D.D."/>
            <person name="Koncz A."/>
            <person name="Gergely P. Jr."/>
            <person name="Stancato C."/>
            <person name="Qian Y."/>
            <person name="Fernandez D."/>
            <person name="Niland B."/>
            <person name="Grossman C.E."/>
            <person name="Telarico T."/>
            <person name="Banki K."/>
            <person name="Perl A."/>
        </authorList>
    </citation>
    <scope>NUCLEOTIDE SEQUENCE [MRNA]</scope>
</reference>
<reference key="3">
    <citation type="submission" date="2002-04" db="EMBL/GenBank/DDBJ databases">
        <title>cDNA clones of human proteins involved in signal transduction sequenced by the Guthrie cDNA resource center (www.cdna.org).</title>
        <authorList>
            <person name="Puhl H.L. III"/>
            <person name="Ikeda S.R."/>
            <person name="Aronstam R.S."/>
        </authorList>
    </citation>
    <scope>NUCLEOTIDE SEQUENCE [LARGE SCALE MRNA]</scope>
    <source>
        <tissue>Brain</tissue>
    </source>
</reference>
<reference key="4">
    <citation type="journal article" date="2004" name="Nat. Genet.">
        <title>Complete sequencing and characterization of 21,243 full-length human cDNAs.</title>
        <authorList>
            <person name="Ota T."/>
            <person name="Suzuki Y."/>
            <person name="Nishikawa T."/>
            <person name="Otsuki T."/>
            <person name="Sugiyama T."/>
            <person name="Irie R."/>
            <person name="Wakamatsu A."/>
            <person name="Hayashi K."/>
            <person name="Sato H."/>
            <person name="Nagai K."/>
            <person name="Kimura K."/>
            <person name="Makita H."/>
            <person name="Sekine M."/>
            <person name="Obayashi M."/>
            <person name="Nishi T."/>
            <person name="Shibahara T."/>
            <person name="Tanaka T."/>
            <person name="Ishii S."/>
            <person name="Yamamoto J."/>
            <person name="Saito K."/>
            <person name="Kawai Y."/>
            <person name="Isono Y."/>
            <person name="Nakamura Y."/>
            <person name="Nagahari K."/>
            <person name="Murakami K."/>
            <person name="Yasuda T."/>
            <person name="Iwayanagi T."/>
            <person name="Wagatsuma M."/>
            <person name="Shiratori A."/>
            <person name="Sudo H."/>
            <person name="Hosoiri T."/>
            <person name="Kaku Y."/>
            <person name="Kodaira H."/>
            <person name="Kondo H."/>
            <person name="Sugawara M."/>
            <person name="Takahashi M."/>
            <person name="Kanda K."/>
            <person name="Yokoi T."/>
            <person name="Furuya T."/>
            <person name="Kikkawa E."/>
            <person name="Omura Y."/>
            <person name="Abe K."/>
            <person name="Kamihara K."/>
            <person name="Katsuta N."/>
            <person name="Sato K."/>
            <person name="Tanikawa M."/>
            <person name="Yamazaki M."/>
            <person name="Ninomiya K."/>
            <person name="Ishibashi T."/>
            <person name="Yamashita H."/>
            <person name="Murakawa K."/>
            <person name="Fujimori K."/>
            <person name="Tanai H."/>
            <person name="Kimata M."/>
            <person name="Watanabe M."/>
            <person name="Hiraoka S."/>
            <person name="Chiba Y."/>
            <person name="Ishida S."/>
            <person name="Ono Y."/>
            <person name="Takiguchi S."/>
            <person name="Watanabe S."/>
            <person name="Yosida M."/>
            <person name="Hotuta T."/>
            <person name="Kusano J."/>
            <person name="Kanehori K."/>
            <person name="Takahashi-Fujii A."/>
            <person name="Hara H."/>
            <person name="Tanase T.-O."/>
            <person name="Nomura Y."/>
            <person name="Togiya S."/>
            <person name="Komai F."/>
            <person name="Hara R."/>
            <person name="Takeuchi K."/>
            <person name="Arita M."/>
            <person name="Imose N."/>
            <person name="Musashino K."/>
            <person name="Yuuki H."/>
            <person name="Oshima A."/>
            <person name="Sasaki N."/>
            <person name="Aotsuka S."/>
            <person name="Yoshikawa Y."/>
            <person name="Matsunawa H."/>
            <person name="Ichihara T."/>
            <person name="Shiohata N."/>
            <person name="Sano S."/>
            <person name="Moriya S."/>
            <person name="Momiyama H."/>
            <person name="Satoh N."/>
            <person name="Takami S."/>
            <person name="Terashima Y."/>
            <person name="Suzuki O."/>
            <person name="Nakagawa S."/>
            <person name="Senoh A."/>
            <person name="Mizoguchi H."/>
            <person name="Goto Y."/>
            <person name="Shimizu F."/>
            <person name="Wakebe H."/>
            <person name="Hishigaki H."/>
            <person name="Watanabe T."/>
            <person name="Sugiyama A."/>
            <person name="Takemoto M."/>
            <person name="Kawakami B."/>
            <person name="Yamazaki M."/>
            <person name="Watanabe K."/>
            <person name="Kumagai A."/>
            <person name="Itakura S."/>
            <person name="Fukuzumi Y."/>
            <person name="Fujimori Y."/>
            <person name="Komiyama M."/>
            <person name="Tashiro H."/>
            <person name="Tanigami A."/>
            <person name="Fujiwara T."/>
            <person name="Ono T."/>
            <person name="Yamada K."/>
            <person name="Fujii Y."/>
            <person name="Ozaki K."/>
            <person name="Hirao M."/>
            <person name="Ohmori Y."/>
            <person name="Kawabata A."/>
            <person name="Hikiji T."/>
            <person name="Kobatake N."/>
            <person name="Inagaki H."/>
            <person name="Ikema Y."/>
            <person name="Okamoto S."/>
            <person name="Okitani R."/>
            <person name="Kawakami T."/>
            <person name="Noguchi S."/>
            <person name="Itoh T."/>
            <person name="Shigeta K."/>
            <person name="Senba T."/>
            <person name="Matsumura K."/>
            <person name="Nakajima Y."/>
            <person name="Mizuno T."/>
            <person name="Morinaga M."/>
            <person name="Sasaki M."/>
            <person name="Togashi T."/>
            <person name="Oyama M."/>
            <person name="Hata H."/>
            <person name="Watanabe M."/>
            <person name="Komatsu T."/>
            <person name="Mizushima-Sugano J."/>
            <person name="Satoh T."/>
            <person name="Shirai Y."/>
            <person name="Takahashi Y."/>
            <person name="Nakagawa K."/>
            <person name="Okumura K."/>
            <person name="Nagase T."/>
            <person name="Nomura N."/>
            <person name="Kikuchi H."/>
            <person name="Masuho Y."/>
            <person name="Yamashita R."/>
            <person name="Nakai K."/>
            <person name="Yada T."/>
            <person name="Nakamura Y."/>
            <person name="Ohara O."/>
            <person name="Isogai T."/>
            <person name="Sugano S."/>
        </authorList>
    </citation>
    <scope>NUCLEOTIDE SEQUENCE [LARGE SCALE MRNA]</scope>
    <source>
        <tissue>Caudate nucleus</tissue>
    </source>
</reference>
<reference key="5">
    <citation type="journal article" date="2006" name="Nature">
        <title>The DNA sequence and biological annotation of human chromosome 1.</title>
        <authorList>
            <person name="Gregory S.G."/>
            <person name="Barlow K.F."/>
            <person name="McLay K.E."/>
            <person name="Kaul R."/>
            <person name="Swarbreck D."/>
            <person name="Dunham A."/>
            <person name="Scott C.E."/>
            <person name="Howe K.L."/>
            <person name="Woodfine K."/>
            <person name="Spencer C.C.A."/>
            <person name="Jones M.C."/>
            <person name="Gillson C."/>
            <person name="Searle S."/>
            <person name="Zhou Y."/>
            <person name="Kokocinski F."/>
            <person name="McDonald L."/>
            <person name="Evans R."/>
            <person name="Phillips K."/>
            <person name="Atkinson A."/>
            <person name="Cooper R."/>
            <person name="Jones C."/>
            <person name="Hall R.E."/>
            <person name="Andrews T.D."/>
            <person name="Lloyd C."/>
            <person name="Ainscough R."/>
            <person name="Almeida J.P."/>
            <person name="Ambrose K.D."/>
            <person name="Anderson F."/>
            <person name="Andrew R.W."/>
            <person name="Ashwell R.I.S."/>
            <person name="Aubin K."/>
            <person name="Babbage A.K."/>
            <person name="Bagguley C.L."/>
            <person name="Bailey J."/>
            <person name="Beasley H."/>
            <person name="Bethel G."/>
            <person name="Bird C.P."/>
            <person name="Bray-Allen S."/>
            <person name="Brown J.Y."/>
            <person name="Brown A.J."/>
            <person name="Buckley D."/>
            <person name="Burton J."/>
            <person name="Bye J."/>
            <person name="Carder C."/>
            <person name="Chapman J.C."/>
            <person name="Clark S.Y."/>
            <person name="Clarke G."/>
            <person name="Clee C."/>
            <person name="Cobley V."/>
            <person name="Collier R.E."/>
            <person name="Corby N."/>
            <person name="Coville G.J."/>
            <person name="Davies J."/>
            <person name="Deadman R."/>
            <person name="Dunn M."/>
            <person name="Earthrowl M."/>
            <person name="Ellington A.G."/>
            <person name="Errington H."/>
            <person name="Frankish A."/>
            <person name="Frankland J."/>
            <person name="French L."/>
            <person name="Garner P."/>
            <person name="Garnett J."/>
            <person name="Gay L."/>
            <person name="Ghori M.R.J."/>
            <person name="Gibson R."/>
            <person name="Gilby L.M."/>
            <person name="Gillett W."/>
            <person name="Glithero R.J."/>
            <person name="Grafham D.V."/>
            <person name="Griffiths C."/>
            <person name="Griffiths-Jones S."/>
            <person name="Grocock R."/>
            <person name="Hammond S."/>
            <person name="Harrison E.S.I."/>
            <person name="Hart E."/>
            <person name="Haugen E."/>
            <person name="Heath P.D."/>
            <person name="Holmes S."/>
            <person name="Holt K."/>
            <person name="Howden P.J."/>
            <person name="Hunt A.R."/>
            <person name="Hunt S.E."/>
            <person name="Hunter G."/>
            <person name="Isherwood J."/>
            <person name="James R."/>
            <person name="Johnson C."/>
            <person name="Johnson D."/>
            <person name="Joy A."/>
            <person name="Kay M."/>
            <person name="Kershaw J.K."/>
            <person name="Kibukawa M."/>
            <person name="Kimberley A.M."/>
            <person name="King A."/>
            <person name="Knights A.J."/>
            <person name="Lad H."/>
            <person name="Laird G."/>
            <person name="Lawlor S."/>
            <person name="Leongamornlert D.A."/>
            <person name="Lloyd D.M."/>
            <person name="Loveland J."/>
            <person name="Lovell J."/>
            <person name="Lush M.J."/>
            <person name="Lyne R."/>
            <person name="Martin S."/>
            <person name="Mashreghi-Mohammadi M."/>
            <person name="Matthews L."/>
            <person name="Matthews N.S.W."/>
            <person name="McLaren S."/>
            <person name="Milne S."/>
            <person name="Mistry S."/>
            <person name="Moore M.J.F."/>
            <person name="Nickerson T."/>
            <person name="O'Dell C.N."/>
            <person name="Oliver K."/>
            <person name="Palmeiri A."/>
            <person name="Palmer S.A."/>
            <person name="Parker A."/>
            <person name="Patel D."/>
            <person name="Pearce A.V."/>
            <person name="Peck A.I."/>
            <person name="Pelan S."/>
            <person name="Phelps K."/>
            <person name="Phillimore B.J."/>
            <person name="Plumb R."/>
            <person name="Rajan J."/>
            <person name="Raymond C."/>
            <person name="Rouse G."/>
            <person name="Saenphimmachak C."/>
            <person name="Sehra H.K."/>
            <person name="Sheridan E."/>
            <person name="Shownkeen R."/>
            <person name="Sims S."/>
            <person name="Skuce C.D."/>
            <person name="Smith M."/>
            <person name="Steward C."/>
            <person name="Subramanian S."/>
            <person name="Sycamore N."/>
            <person name="Tracey A."/>
            <person name="Tromans A."/>
            <person name="Van Helmond Z."/>
            <person name="Wall M."/>
            <person name="Wallis J.M."/>
            <person name="White S."/>
            <person name="Whitehead S.L."/>
            <person name="Wilkinson J.E."/>
            <person name="Willey D.L."/>
            <person name="Williams H."/>
            <person name="Wilming L."/>
            <person name="Wray P.W."/>
            <person name="Wu Z."/>
            <person name="Coulson A."/>
            <person name="Vaudin M."/>
            <person name="Sulston J.E."/>
            <person name="Durbin R.M."/>
            <person name="Hubbard T."/>
            <person name="Wooster R."/>
            <person name="Dunham I."/>
            <person name="Carter N.P."/>
            <person name="McVean G."/>
            <person name="Ross M.T."/>
            <person name="Harrow J."/>
            <person name="Olson M.V."/>
            <person name="Beck S."/>
            <person name="Rogers J."/>
            <person name="Bentley D.R."/>
        </authorList>
    </citation>
    <scope>NUCLEOTIDE SEQUENCE [LARGE SCALE GENOMIC DNA]</scope>
</reference>
<reference key="6">
    <citation type="submission" date="2005-07" db="EMBL/GenBank/DDBJ databases">
        <authorList>
            <person name="Mural R.J."/>
            <person name="Istrail S."/>
            <person name="Sutton G.G."/>
            <person name="Florea L."/>
            <person name="Halpern A.L."/>
            <person name="Mobarry C.M."/>
            <person name="Lippert R."/>
            <person name="Walenz B."/>
            <person name="Shatkay H."/>
            <person name="Dew I."/>
            <person name="Miller J.R."/>
            <person name="Flanigan M.J."/>
            <person name="Edwards N.J."/>
            <person name="Bolanos R."/>
            <person name="Fasulo D."/>
            <person name="Halldorsson B.V."/>
            <person name="Hannenhalli S."/>
            <person name="Turner R."/>
            <person name="Yooseph S."/>
            <person name="Lu F."/>
            <person name="Nusskern D.R."/>
            <person name="Shue B.C."/>
            <person name="Zheng X.H."/>
            <person name="Zhong F."/>
            <person name="Delcher A.L."/>
            <person name="Huson D.H."/>
            <person name="Kravitz S.A."/>
            <person name="Mouchard L."/>
            <person name="Reinert K."/>
            <person name="Remington K.A."/>
            <person name="Clark A.G."/>
            <person name="Waterman M.S."/>
            <person name="Eichler E.E."/>
            <person name="Adams M.D."/>
            <person name="Hunkapiller M.W."/>
            <person name="Myers E.W."/>
            <person name="Venter J.C."/>
        </authorList>
    </citation>
    <scope>NUCLEOTIDE SEQUENCE [LARGE SCALE GENOMIC DNA]</scope>
</reference>
<reference key="7">
    <citation type="journal article" date="2004" name="Genome Res.">
        <title>The status, quality, and expansion of the NIH full-length cDNA project: the Mammalian Gene Collection (MGC).</title>
        <authorList>
            <consortium name="The MGC Project Team"/>
        </authorList>
    </citation>
    <scope>NUCLEOTIDE SEQUENCE [LARGE SCALE MRNA]</scope>
    <source>
        <tissue>Skin</tissue>
        <tissue>Uterus</tissue>
    </source>
</reference>
<reference key="8">
    <citation type="journal article" date="1991" name="Nature">
        <title>Phosphorylation of two small GTP-binding proteins of the Rab family by p34cdc2.</title>
        <authorList>
            <person name="Bailly E."/>
            <person name="McCaffrey M."/>
            <person name="Touchot N."/>
            <person name="Zahraoui A."/>
            <person name="Goud B."/>
            <person name="Bornens M."/>
        </authorList>
    </citation>
    <scope>PHOSPHORYLATION BY CDK1</scope>
</reference>
<reference key="9">
    <citation type="journal article" date="1992" name="EMBO J.">
        <title>Reversible phosphorylation-dephosphorylation determines the localization of rab4 during the cell cycle.</title>
        <authorList>
            <person name="van der Sluijs P."/>
            <person name="Hull M."/>
            <person name="Huber L.A."/>
            <person name="Male P."/>
            <person name="Goud B."/>
            <person name="Mellman I."/>
        </authorList>
    </citation>
    <scope>PHOSPHORYLATION AT SER-204 BY CDK1</scope>
    <scope>SUBCELLULAR LOCATION</scope>
</reference>
<reference key="10">
    <citation type="journal article" date="2000" name="Biochem. J.">
        <title>Rabaptin4, a novel effector of the small GTPase rab4a, is recruited to perinuclear recycling vesicles.</title>
        <authorList>
            <person name="Nagelkerken B."/>
            <person name="van Anken E."/>
            <person name="van Raak M."/>
            <person name="Gerez L."/>
            <person name="Mohrmann K."/>
            <person name="van Uden N."/>
            <person name="Holthuizen J."/>
            <person name="Pelkmans L."/>
            <person name="van der Sluijs P."/>
        </authorList>
    </citation>
    <scope>INTERACTION WITH RABEP1</scope>
</reference>
<reference key="11">
    <citation type="journal article" date="2002" name="J. Biol. Chem.">
        <title>Rab coupling protein (RCP), a novel Rab4 and Rab11 effector protein.</title>
        <authorList>
            <person name="Lindsay A.J."/>
            <person name="Hendrick A.G."/>
            <person name="Cantalupo G."/>
            <person name="Senic-Matuglia F."/>
            <person name="Goud B."/>
            <person name="Bucci C."/>
            <person name="McCaffrey M.W."/>
        </authorList>
    </citation>
    <scope>INTERACTION WITH RAB11FIP1</scope>
    <source>
        <tissue>Cervix carcinoma</tissue>
    </source>
</reference>
<reference key="12">
    <citation type="journal article" date="2002" name="Nat. Cell Biol.">
        <title>Divalent Rab effectors regulate the sub-compartmental organization and sorting of early endosomes.</title>
        <authorList>
            <person name="de Renzis S."/>
            <person name="Soennichsen B."/>
            <person name="Zerial M."/>
        </authorList>
    </citation>
    <scope>INTERACTION WITH ZFYVE20</scope>
</reference>
<reference key="13">
    <citation type="journal article" date="2004" name="FEBS Lett.">
        <title>Characterisation of the Rab binding properties of Rab coupling protein (RCP) by site-directed mutagenesis.</title>
        <authorList>
            <person name="Lindsay A.J."/>
            <person name="McCaffrey M.W."/>
        </authorList>
    </citation>
    <scope>INTERACTION WITH RAB11FIP1</scope>
</reference>
<reference key="14">
    <citation type="journal article" date="2004" name="Mol. Biol. Cell">
        <title>Rabip4' is an effector of rab5 and rab4 and regulates transport through early endosomes.</title>
        <authorList>
            <person name="Fouraux M.A."/>
            <person name="Deneka M."/>
            <person name="Ivan V."/>
            <person name="van der Heijden A."/>
            <person name="Raymackers J."/>
            <person name="van Suylekom D."/>
            <person name="van Venrooij W.J."/>
            <person name="van der Sluijs P."/>
            <person name="Pruijn G.J.M."/>
        </authorList>
    </citation>
    <scope>INTERACTION WITH RUFY1</scope>
</reference>
<reference key="15">
    <citation type="journal article" date="2007" name="PLoS ONE">
        <title>The N-Myc down regulated Gene1 (NDRG1) is a Rab4a effector involved in vesicular recycling of E-cadherin.</title>
        <authorList>
            <person name="Kachhap S.K."/>
            <person name="Faith D."/>
            <person name="Qian D.Z."/>
            <person name="Shabbeer S."/>
            <person name="Galloway N.L."/>
            <person name="Pili R."/>
            <person name="Denmeade S.R."/>
            <person name="DeMarzo A.M."/>
            <person name="Carducci M.A."/>
        </authorList>
    </citation>
    <scope>INTERACTION WITH NDRG1</scope>
</reference>
<reference key="16">
    <citation type="journal article" date="2010" name="PLoS Biol.">
        <title>Neuron specific Rab4 effector GRASP-1 coordinates membrane specialization and maturation of recycling endosomes.</title>
        <authorList>
            <person name="Hoogenraad C.C."/>
            <person name="Popa I."/>
            <person name="Futai K."/>
            <person name="Martinez-Sanchez E."/>
            <person name="Sanchez-Martinez E."/>
            <person name="Wulf P.S."/>
            <person name="van Vlijmen T."/>
            <person name="Dortland B.R."/>
            <person name="Oorschot V."/>
            <person name="Govers R."/>
            <person name="Monti M."/>
            <person name="Heck A.J."/>
            <person name="Sheng M."/>
            <person name="Klumperman J."/>
            <person name="Rehmann H."/>
            <person name="Jaarsma D."/>
            <person name="Kapitein L.C."/>
            <person name="van der Sluijs P."/>
        </authorList>
    </citation>
    <scope>INTERACTION WITH GRIPAP1; RABEP1 AND RBSN</scope>
</reference>
<reference key="17">
    <citation type="journal article" date="2011" name="BMC Syst. Biol.">
        <title>Initial characterization of the human central proteome.</title>
        <authorList>
            <person name="Burkard T.R."/>
            <person name="Planyavsky M."/>
            <person name="Kaupe I."/>
            <person name="Breitwieser F.P."/>
            <person name="Buerckstuemmer T."/>
            <person name="Bennett K.L."/>
            <person name="Superti-Furga G."/>
            <person name="Colinge J."/>
        </authorList>
    </citation>
    <scope>IDENTIFICATION BY MASS SPECTROMETRY [LARGE SCALE ANALYSIS]</scope>
</reference>
<reference key="18">
    <citation type="journal article" date="2013" name="J. Proteome Res.">
        <title>Toward a comprehensive characterization of a human cancer cell phosphoproteome.</title>
        <authorList>
            <person name="Zhou H."/>
            <person name="Di Palma S."/>
            <person name="Preisinger C."/>
            <person name="Peng M."/>
            <person name="Polat A.N."/>
            <person name="Heck A.J."/>
            <person name="Mohammed S."/>
        </authorList>
    </citation>
    <scope>PHOSPHORYLATION [LARGE SCALE ANALYSIS] AT SER-190</scope>
    <scope>IDENTIFICATION BY MASS SPECTROMETRY [LARGE SCALE ANALYSIS]</scope>
    <source>
        <tissue>Erythroleukemia</tissue>
    </source>
</reference>
<reference key="19">
    <citation type="journal article" date="2018" name="J. Biol. Chem.">
        <title>The Rab-effector protein RABEP2 regulates endosomal trafficking to mediate vascular endothelial growth factor receptor-2 (VEGFR2)-dependent signaling.</title>
        <authorList>
            <person name="Kofler N."/>
            <person name="Corti F."/>
            <person name="Rivera-Molina F."/>
            <person name="Deng Y."/>
            <person name="Toomre D."/>
            <person name="Simons M."/>
        </authorList>
    </citation>
    <scope>FUNCTION</scope>
    <scope>INTERACTION WITH RABEP2</scope>
</reference>
<reference evidence="24 25" key="20">
    <citation type="journal article" date="2005" name="FEBS Lett.">
        <title>High resolution crystal structures of human Rab4a in its active and inactive conformations.</title>
        <authorList>
            <person name="Huber S.K."/>
            <person name="Scheidig A.J."/>
        </authorList>
    </citation>
    <scope>X-RAY CRYSTALLOGRAPHY (1.57 ANGSTROMS) OF 6-189 IN COMPLEX WITH GDP AND MG(2+)</scope>
    <scope>FUNCTION</scope>
    <scope>CATALYTIC ACTIVITY</scope>
    <scope>COFACTOR</scope>
</reference>
<reference evidence="22 23" key="21">
    <citation type="journal article" date="2005" name="Nature">
        <title>Structural basis of family-wide Rab GTPase recognition by rabenosyn-5.</title>
        <authorList>
            <person name="Eathiraj S."/>
            <person name="Pan X."/>
            <person name="Ritacco C."/>
            <person name="Lambright D.G."/>
        </authorList>
    </citation>
    <scope>X-RAY CRYSTALLOGRAPHY (1.92 ANGSTROMS) OF 7-177 IN COMPLEX WITH GTP AND MG(2+)</scope>
    <scope>FUNCTION</scope>
    <scope>CATALYTIC ACTIVITY</scope>
    <scope>INTERACTION WITH ZFYVE20</scope>
    <scope>MUTAGENESIS OF GLY-51</scope>
    <scope>COFACTOR</scope>
</reference>